<gene>
    <name evidence="1" type="primary">nuoD</name>
    <name type="ordered locus">bll4916</name>
</gene>
<accession>Q89KI9</accession>
<protein>
    <recommendedName>
        <fullName evidence="1">NADH-quinone oxidoreductase subunit D</fullName>
        <ecNumber evidence="1">7.1.1.-</ecNumber>
    </recommendedName>
    <alternativeName>
        <fullName evidence="1">NADH dehydrogenase I subunit D</fullName>
    </alternativeName>
    <alternativeName>
        <fullName evidence="1">NDH-1 subunit D</fullName>
    </alternativeName>
</protein>
<sequence length="398" mass="45058">MNEQPENLRNFTINFGPQHPAAHGVLRLVLELDGEIVARVDPHIGLLHRGTEKLIEQKTYLQAIPYFDRLDYVAPMNQEHAFCLAAEKLLGIEVPRRGQLIRVLYCEIGRILSHLLNVTTQAMDVGALTPPLWGFEEREKLMVFYERASGSRMHAAFFRVGGVHQDLPQKLVDDIEAWCDPFLKVVDDLDRLLTANRIFKQRNVDIGVVPLKEAWEWGFSGVMVRGSGAAWDLRKSQPYECYAEMDFDIPIGKNGDCYDRYLIRMEEMRQSVRIMRQCIQKLNAPEGKGPVVVEDNKVAPPRRGEMKRSMEALIHHFKLYTEGVHVPAGEVYAAVEAPKGEFGVYLVADGTNKPYKCKIRAPGFAHLQAMDHICRGHLLADVSAILGSLDIVFGEVDR</sequence>
<dbReference type="EC" id="7.1.1.-" evidence="1"/>
<dbReference type="EMBL" id="BA000040">
    <property type="protein sequence ID" value="BAC50181.1"/>
    <property type="molecule type" value="Genomic_DNA"/>
</dbReference>
<dbReference type="RefSeq" id="NP_771556.1">
    <property type="nucleotide sequence ID" value="NC_004463.1"/>
</dbReference>
<dbReference type="RefSeq" id="WP_011087682.1">
    <property type="nucleotide sequence ID" value="NC_004463.1"/>
</dbReference>
<dbReference type="SMR" id="Q89KI9"/>
<dbReference type="FunCoup" id="Q89KI9">
    <property type="interactions" value="486"/>
</dbReference>
<dbReference type="STRING" id="224911.AAV28_21905"/>
<dbReference type="EnsemblBacteria" id="BAC50181">
    <property type="protein sequence ID" value="BAC50181"/>
    <property type="gene ID" value="BAC50181"/>
</dbReference>
<dbReference type="GeneID" id="46491920"/>
<dbReference type="KEGG" id="bja:bll4916"/>
<dbReference type="PATRIC" id="fig|224911.44.peg.4766"/>
<dbReference type="eggNOG" id="COG0649">
    <property type="taxonomic scope" value="Bacteria"/>
</dbReference>
<dbReference type="HOGENOM" id="CLU_015134_1_1_5"/>
<dbReference type="InParanoid" id="Q89KI9"/>
<dbReference type="OrthoDB" id="9801496at2"/>
<dbReference type="PhylomeDB" id="Q89KI9"/>
<dbReference type="Proteomes" id="UP000002526">
    <property type="component" value="Chromosome"/>
</dbReference>
<dbReference type="GO" id="GO:0005886">
    <property type="term" value="C:plasma membrane"/>
    <property type="evidence" value="ECO:0007669"/>
    <property type="project" value="UniProtKB-SubCell"/>
</dbReference>
<dbReference type="GO" id="GO:0051287">
    <property type="term" value="F:NAD binding"/>
    <property type="evidence" value="ECO:0007669"/>
    <property type="project" value="InterPro"/>
</dbReference>
<dbReference type="GO" id="GO:0050136">
    <property type="term" value="F:NADH:ubiquinone reductase (non-electrogenic) activity"/>
    <property type="evidence" value="ECO:0007669"/>
    <property type="project" value="UniProtKB-UniRule"/>
</dbReference>
<dbReference type="GO" id="GO:0048038">
    <property type="term" value="F:quinone binding"/>
    <property type="evidence" value="ECO:0007669"/>
    <property type="project" value="UniProtKB-KW"/>
</dbReference>
<dbReference type="FunFam" id="1.10.645.10:FF:000005">
    <property type="entry name" value="NADH-quinone oxidoreductase subunit D"/>
    <property type="match status" value="1"/>
</dbReference>
<dbReference type="Gene3D" id="1.10.645.10">
    <property type="entry name" value="Cytochrome-c3 Hydrogenase, chain B"/>
    <property type="match status" value="1"/>
</dbReference>
<dbReference type="HAMAP" id="MF_01358">
    <property type="entry name" value="NDH1_NuoD"/>
    <property type="match status" value="1"/>
</dbReference>
<dbReference type="InterPro" id="IPR001135">
    <property type="entry name" value="NADH_Q_OxRdtase_suD"/>
</dbReference>
<dbReference type="InterPro" id="IPR014029">
    <property type="entry name" value="NADH_UbQ_OxRdtase_49kDa_CS"/>
</dbReference>
<dbReference type="InterPro" id="IPR022885">
    <property type="entry name" value="NDH1_su_D/H"/>
</dbReference>
<dbReference type="InterPro" id="IPR029014">
    <property type="entry name" value="NiFe-Hase_large"/>
</dbReference>
<dbReference type="NCBIfam" id="TIGR01962">
    <property type="entry name" value="NuoD"/>
    <property type="match status" value="1"/>
</dbReference>
<dbReference type="NCBIfam" id="NF004739">
    <property type="entry name" value="PRK06075.1"/>
    <property type="match status" value="1"/>
</dbReference>
<dbReference type="PANTHER" id="PTHR11993:SF10">
    <property type="entry name" value="NADH DEHYDROGENASE [UBIQUINONE] IRON-SULFUR PROTEIN 2, MITOCHONDRIAL"/>
    <property type="match status" value="1"/>
</dbReference>
<dbReference type="PANTHER" id="PTHR11993">
    <property type="entry name" value="NADH-UBIQUINONE OXIDOREDUCTASE 49 KDA SUBUNIT"/>
    <property type="match status" value="1"/>
</dbReference>
<dbReference type="Pfam" id="PF00346">
    <property type="entry name" value="Complex1_49kDa"/>
    <property type="match status" value="1"/>
</dbReference>
<dbReference type="SUPFAM" id="SSF56762">
    <property type="entry name" value="HydB/Nqo4-like"/>
    <property type="match status" value="1"/>
</dbReference>
<dbReference type="PROSITE" id="PS00535">
    <property type="entry name" value="COMPLEX1_49K"/>
    <property type="match status" value="1"/>
</dbReference>
<reference key="1">
    <citation type="journal article" date="2002" name="DNA Res.">
        <title>Complete genomic sequence of nitrogen-fixing symbiotic bacterium Bradyrhizobium japonicum USDA110.</title>
        <authorList>
            <person name="Kaneko T."/>
            <person name="Nakamura Y."/>
            <person name="Sato S."/>
            <person name="Minamisawa K."/>
            <person name="Uchiumi T."/>
            <person name="Sasamoto S."/>
            <person name="Watanabe A."/>
            <person name="Idesawa K."/>
            <person name="Iriguchi M."/>
            <person name="Kawashima K."/>
            <person name="Kohara M."/>
            <person name="Matsumoto M."/>
            <person name="Shimpo S."/>
            <person name="Tsuruoka H."/>
            <person name="Wada T."/>
            <person name="Yamada M."/>
            <person name="Tabata S."/>
        </authorList>
    </citation>
    <scope>NUCLEOTIDE SEQUENCE [LARGE SCALE GENOMIC DNA]</scope>
    <source>
        <strain>JCM 10833 / BCRC 13528 / IAM 13628 / NBRC 14792 / USDA 110</strain>
    </source>
</reference>
<comment type="function">
    <text evidence="1">NDH-1 shuttles electrons from NADH, via FMN and iron-sulfur (Fe-S) centers, to quinones in the respiratory chain. The immediate electron acceptor for the enzyme in this species is believed to be ubiquinone. Couples the redox reaction to proton translocation (for every two electrons transferred, four hydrogen ions are translocated across the cytoplasmic membrane), and thus conserves the redox energy in a proton gradient.</text>
</comment>
<comment type="catalytic activity">
    <reaction evidence="1">
        <text>a quinone + NADH + 5 H(+)(in) = a quinol + NAD(+) + 4 H(+)(out)</text>
        <dbReference type="Rhea" id="RHEA:57888"/>
        <dbReference type="ChEBI" id="CHEBI:15378"/>
        <dbReference type="ChEBI" id="CHEBI:24646"/>
        <dbReference type="ChEBI" id="CHEBI:57540"/>
        <dbReference type="ChEBI" id="CHEBI:57945"/>
        <dbReference type="ChEBI" id="CHEBI:132124"/>
    </reaction>
</comment>
<comment type="subunit">
    <text evidence="1">NDH-1 is composed of 14 different subunits. Subunits NuoB, C, D, E, F, and G constitute the peripheral sector of the complex.</text>
</comment>
<comment type="subcellular location">
    <subcellularLocation>
        <location evidence="1">Cell inner membrane</location>
        <topology evidence="1">Peripheral membrane protein</topology>
        <orientation evidence="1">Cytoplasmic side</orientation>
    </subcellularLocation>
</comment>
<comment type="similarity">
    <text evidence="1">Belongs to the complex I 49 kDa subunit family.</text>
</comment>
<proteinExistence type="inferred from homology"/>
<keyword id="KW-0997">Cell inner membrane</keyword>
<keyword id="KW-1003">Cell membrane</keyword>
<keyword id="KW-0472">Membrane</keyword>
<keyword id="KW-0520">NAD</keyword>
<keyword id="KW-0874">Quinone</keyword>
<keyword id="KW-1185">Reference proteome</keyword>
<keyword id="KW-1278">Translocase</keyword>
<keyword id="KW-0813">Transport</keyword>
<keyword id="KW-0830">Ubiquinone</keyword>
<evidence type="ECO:0000255" key="1">
    <source>
        <dbReference type="HAMAP-Rule" id="MF_01358"/>
    </source>
</evidence>
<name>NUOD_BRADU</name>
<organism>
    <name type="scientific">Bradyrhizobium diazoefficiens (strain JCM 10833 / BCRC 13528 / IAM 13628 / NBRC 14792 / USDA 110)</name>
    <dbReference type="NCBI Taxonomy" id="224911"/>
    <lineage>
        <taxon>Bacteria</taxon>
        <taxon>Pseudomonadati</taxon>
        <taxon>Pseudomonadota</taxon>
        <taxon>Alphaproteobacteria</taxon>
        <taxon>Hyphomicrobiales</taxon>
        <taxon>Nitrobacteraceae</taxon>
        <taxon>Bradyrhizobium</taxon>
    </lineage>
</organism>
<feature type="chain" id="PRO_0000357779" description="NADH-quinone oxidoreductase subunit D">
    <location>
        <begin position="1"/>
        <end position="398"/>
    </location>
</feature>